<accession>P9WPA7</accession>
<accession>L0T5P3</accession>
<accession>O53440</accession>
<accession>P63810</accession>
<keyword id="KW-0002">3D-structure</keyword>
<keyword id="KW-0067">ATP-binding</keyword>
<keyword id="KW-0173">Coenzyme A biosynthesis</keyword>
<keyword id="KW-0963">Cytoplasm</keyword>
<keyword id="KW-0418">Kinase</keyword>
<keyword id="KW-0547">Nucleotide-binding</keyword>
<keyword id="KW-1185">Reference proteome</keyword>
<keyword id="KW-0808">Transferase</keyword>
<sequence>MSRLSEPSPYVEFDRRQWRALRMSTPLALTEEELVGLRGLGEQIDLLEVEEVYLPLARLIHLQVAARQRLFAATAEFLGEPQQNPDRPVPFIIGVAGSVAVGKSTTARVLQALLARWDHHPRVDLVTTDGFLYPNAELQRRNLMHRKGFPESYNRRALMRFVTSVKSGSDYACAPVYSHLHYDIIPGAEQVVRHPDILILEGLNVLQTGPTLMVSDLFDFSLYVDARIEDIEQWYVSRFLAMRTTAFADPESHFHHYAAFSDSQAVVAAREIWRTINRPNLVENILPTRPRATLVLRKDADHSINRLRLRKL</sequence>
<name>COAA_MYCTU</name>
<gene>
    <name type="primary">coaA</name>
    <name type="ordered locus">Rv1092c</name>
    <name type="ORF">MTV017.45c</name>
</gene>
<reference key="1">
    <citation type="journal article" date="1998" name="Nature">
        <title>Deciphering the biology of Mycobacterium tuberculosis from the complete genome sequence.</title>
        <authorList>
            <person name="Cole S.T."/>
            <person name="Brosch R."/>
            <person name="Parkhill J."/>
            <person name="Garnier T."/>
            <person name="Churcher C.M."/>
            <person name="Harris D.E."/>
            <person name="Gordon S.V."/>
            <person name="Eiglmeier K."/>
            <person name="Gas S."/>
            <person name="Barry C.E. III"/>
            <person name="Tekaia F."/>
            <person name="Badcock K."/>
            <person name="Basham D."/>
            <person name="Brown D."/>
            <person name="Chillingworth T."/>
            <person name="Connor R."/>
            <person name="Davies R.M."/>
            <person name="Devlin K."/>
            <person name="Feltwell T."/>
            <person name="Gentles S."/>
            <person name="Hamlin N."/>
            <person name="Holroyd S."/>
            <person name="Hornsby T."/>
            <person name="Jagels K."/>
            <person name="Krogh A."/>
            <person name="McLean J."/>
            <person name="Moule S."/>
            <person name="Murphy L.D."/>
            <person name="Oliver S."/>
            <person name="Osborne J."/>
            <person name="Quail M.A."/>
            <person name="Rajandream M.A."/>
            <person name="Rogers J."/>
            <person name="Rutter S."/>
            <person name="Seeger K."/>
            <person name="Skelton S."/>
            <person name="Squares S."/>
            <person name="Squares R."/>
            <person name="Sulston J.E."/>
            <person name="Taylor K."/>
            <person name="Whitehead S."/>
            <person name="Barrell B.G."/>
        </authorList>
    </citation>
    <scope>NUCLEOTIDE SEQUENCE [LARGE SCALE GENOMIC DNA]</scope>
    <source>
        <strain>ATCC 25618 / H37Rv</strain>
    </source>
</reference>
<reference key="2">
    <citation type="journal article" date="2008" name="BMC Syst. Biol.">
        <title>targetTB: a target identification pipeline for Mycobacterium tuberculosis through an interactome, reactome and genome-scale structural analysis.</title>
        <authorList>
            <person name="Raman K."/>
            <person name="Yeturu K."/>
            <person name="Chandra N."/>
        </authorList>
    </citation>
    <scope>IDENTIFICATION AS A DRUG TARGET [LARGE SCALE ANALYSIS]</scope>
</reference>
<reference key="3">
    <citation type="journal article" date="2011" name="Mol. Cell. Proteomics">
        <title>Proteogenomic analysis of Mycobacterium tuberculosis by high resolution mass spectrometry.</title>
        <authorList>
            <person name="Kelkar D.S."/>
            <person name="Kumar D."/>
            <person name="Kumar P."/>
            <person name="Balakrishnan L."/>
            <person name="Muthusamy B."/>
            <person name="Yadav A.K."/>
            <person name="Shrivastava P."/>
            <person name="Marimuthu A."/>
            <person name="Anand S."/>
            <person name="Sundaram H."/>
            <person name="Kingsbury R."/>
            <person name="Harsha H.C."/>
            <person name="Nair B."/>
            <person name="Prasad T.S."/>
            <person name="Chauhan D.S."/>
            <person name="Katoch K."/>
            <person name="Katoch V.M."/>
            <person name="Kumar P."/>
            <person name="Chaerkady R."/>
            <person name="Ramachandran S."/>
            <person name="Dash D."/>
            <person name="Pandey A."/>
        </authorList>
    </citation>
    <scope>IDENTIFICATION BY MASS SPECTROMETRY [LARGE SCALE ANALYSIS]</scope>
    <source>
        <strain>ATCC 25618 / H37Rv</strain>
    </source>
</reference>
<comment type="catalytic activity">
    <reaction>
        <text>(R)-pantothenate + ATP = (R)-4'-phosphopantothenate + ADP + H(+)</text>
        <dbReference type="Rhea" id="RHEA:16373"/>
        <dbReference type="ChEBI" id="CHEBI:10986"/>
        <dbReference type="ChEBI" id="CHEBI:15378"/>
        <dbReference type="ChEBI" id="CHEBI:29032"/>
        <dbReference type="ChEBI" id="CHEBI:30616"/>
        <dbReference type="ChEBI" id="CHEBI:456216"/>
        <dbReference type="EC" id="2.7.1.33"/>
    </reaction>
</comment>
<comment type="pathway">
    <text>Cofactor biosynthesis; coenzyme A biosynthesis; CoA from (R)-pantothenate: step 1/5.</text>
</comment>
<comment type="subcellular location">
    <subcellularLocation>
        <location evidence="1">Cytoplasm</location>
    </subcellularLocation>
</comment>
<comment type="miscellaneous">
    <text>Was identified as a high-confidence drug target.</text>
</comment>
<comment type="similarity">
    <text evidence="3">Belongs to the prokaryotic pantothenate kinase family.</text>
</comment>
<feature type="chain" id="PRO_0000194439" description="Pantothenate kinase">
    <location>
        <begin position="1"/>
        <end position="312"/>
    </location>
</feature>
<feature type="binding site" evidence="2">
    <location>
        <begin position="97"/>
        <end position="104"/>
    </location>
    <ligand>
        <name>ATP</name>
        <dbReference type="ChEBI" id="CHEBI:30616"/>
    </ligand>
</feature>
<feature type="strand" evidence="8">
    <location>
        <begin position="9"/>
        <end position="14"/>
    </location>
</feature>
<feature type="helix" evidence="8">
    <location>
        <begin position="15"/>
        <end position="20"/>
    </location>
</feature>
<feature type="strand" evidence="5">
    <location>
        <begin position="23"/>
        <end position="25"/>
    </location>
</feature>
<feature type="helix" evidence="8">
    <location>
        <begin position="31"/>
        <end position="36"/>
    </location>
</feature>
<feature type="helix" evidence="8">
    <location>
        <begin position="37"/>
        <end position="40"/>
    </location>
</feature>
<feature type="strand" evidence="7">
    <location>
        <begin position="42"/>
        <end position="44"/>
    </location>
</feature>
<feature type="helix" evidence="8">
    <location>
        <begin position="46"/>
        <end position="51"/>
    </location>
</feature>
<feature type="helix" evidence="8">
    <location>
        <begin position="53"/>
        <end position="77"/>
    </location>
</feature>
<feature type="strand" evidence="9">
    <location>
        <begin position="82"/>
        <end position="84"/>
    </location>
</feature>
<feature type="strand" evidence="4">
    <location>
        <begin position="85"/>
        <end position="87"/>
    </location>
</feature>
<feature type="strand" evidence="8">
    <location>
        <begin position="91"/>
        <end position="96"/>
    </location>
</feature>
<feature type="helix" evidence="8">
    <location>
        <begin position="103"/>
        <end position="114"/>
    </location>
</feature>
<feature type="strand" evidence="6">
    <location>
        <begin position="117"/>
        <end position="119"/>
    </location>
</feature>
<feature type="strand" evidence="8">
    <location>
        <begin position="123"/>
        <end position="127"/>
    </location>
</feature>
<feature type="helix" evidence="8">
    <location>
        <begin position="128"/>
        <end position="131"/>
    </location>
</feature>
<feature type="helix" evidence="8">
    <location>
        <begin position="135"/>
        <end position="140"/>
    </location>
</feature>
<feature type="helix" evidence="8">
    <location>
        <begin position="144"/>
        <end position="146"/>
    </location>
</feature>
<feature type="helix" evidence="8">
    <location>
        <begin position="150"/>
        <end position="152"/>
    </location>
</feature>
<feature type="helix" evidence="8">
    <location>
        <begin position="155"/>
        <end position="166"/>
    </location>
</feature>
<feature type="strand" evidence="8">
    <location>
        <begin position="172"/>
        <end position="174"/>
    </location>
</feature>
<feature type="turn" evidence="8">
    <location>
        <begin position="179"/>
        <end position="182"/>
    </location>
</feature>
<feature type="strand" evidence="8">
    <location>
        <begin position="190"/>
        <end position="192"/>
    </location>
</feature>
<feature type="strand" evidence="8">
    <location>
        <begin position="196"/>
        <end position="202"/>
    </location>
</feature>
<feature type="turn" evidence="8">
    <location>
        <begin position="203"/>
        <end position="206"/>
    </location>
</feature>
<feature type="strand" evidence="7">
    <location>
        <begin position="210"/>
        <end position="212"/>
    </location>
</feature>
<feature type="helix" evidence="8">
    <location>
        <begin position="214"/>
        <end position="217"/>
    </location>
</feature>
<feature type="strand" evidence="8">
    <location>
        <begin position="219"/>
        <end position="225"/>
    </location>
</feature>
<feature type="helix" evidence="8">
    <location>
        <begin position="228"/>
        <end position="242"/>
    </location>
</feature>
<feature type="turn" evidence="8">
    <location>
        <begin position="243"/>
        <end position="245"/>
    </location>
</feature>
<feature type="helix" evidence="8">
    <location>
        <begin position="246"/>
        <end position="248"/>
    </location>
</feature>
<feature type="turn" evidence="9">
    <location>
        <begin position="250"/>
        <end position="254"/>
    </location>
</feature>
<feature type="helix" evidence="8">
    <location>
        <begin position="255"/>
        <end position="257"/>
    </location>
</feature>
<feature type="helix" evidence="8">
    <location>
        <begin position="262"/>
        <end position="275"/>
    </location>
</feature>
<feature type="helix" evidence="8">
    <location>
        <begin position="277"/>
        <end position="284"/>
    </location>
</feature>
<feature type="helix" evidence="8">
    <location>
        <begin position="286"/>
        <end position="291"/>
    </location>
</feature>
<feature type="strand" evidence="8">
    <location>
        <begin position="292"/>
        <end position="298"/>
    </location>
</feature>
<feature type="strand" evidence="8">
    <location>
        <begin position="304"/>
        <end position="310"/>
    </location>
</feature>
<evidence type="ECO:0000250" key="1"/>
<evidence type="ECO:0000255" key="2"/>
<evidence type="ECO:0000305" key="3"/>
<evidence type="ECO:0007829" key="4">
    <source>
        <dbReference type="PDB" id="3AEZ"/>
    </source>
</evidence>
<evidence type="ECO:0007829" key="5">
    <source>
        <dbReference type="PDB" id="4BFW"/>
    </source>
</evidence>
<evidence type="ECO:0007829" key="6">
    <source>
        <dbReference type="PDB" id="4BFX"/>
    </source>
</evidence>
<evidence type="ECO:0007829" key="7">
    <source>
        <dbReference type="PDB" id="4BFZ"/>
    </source>
</evidence>
<evidence type="ECO:0007829" key="8">
    <source>
        <dbReference type="PDB" id="5XLV"/>
    </source>
</evidence>
<evidence type="ECO:0007829" key="9">
    <source>
        <dbReference type="PDB" id="5XLW"/>
    </source>
</evidence>
<dbReference type="EC" id="2.7.1.33"/>
<dbReference type="EMBL" id="AL123456">
    <property type="protein sequence ID" value="CCP43845.1"/>
    <property type="molecule type" value="Genomic_DNA"/>
</dbReference>
<dbReference type="PIR" id="B70896">
    <property type="entry name" value="B70896"/>
</dbReference>
<dbReference type="RefSeq" id="NP_215608.1">
    <property type="nucleotide sequence ID" value="NC_000962.3"/>
</dbReference>
<dbReference type="RefSeq" id="WP_003405790.1">
    <property type="nucleotide sequence ID" value="NZ_NVQJ01000021.1"/>
</dbReference>
<dbReference type="PDB" id="2GES">
    <property type="method" value="X-ray"/>
    <property type="resolution" value="2.40 A"/>
    <property type="chains" value="A=1-312"/>
</dbReference>
<dbReference type="PDB" id="2GET">
    <property type="method" value="X-ray"/>
    <property type="resolution" value="2.35 A"/>
    <property type="chains" value="A=1-312"/>
</dbReference>
<dbReference type="PDB" id="2GEU">
    <property type="method" value="X-ray"/>
    <property type="resolution" value="2.90 A"/>
    <property type="chains" value="A=1-312"/>
</dbReference>
<dbReference type="PDB" id="2GEV">
    <property type="method" value="X-ray"/>
    <property type="resolution" value="2.35 A"/>
    <property type="chains" value="A=1-312"/>
</dbReference>
<dbReference type="PDB" id="2ZS7">
    <property type="method" value="X-ray"/>
    <property type="resolution" value="2.65 A"/>
    <property type="chains" value="A=1-312"/>
</dbReference>
<dbReference type="PDB" id="2ZS8">
    <property type="method" value="X-ray"/>
    <property type="resolution" value="2.80 A"/>
    <property type="chains" value="A=1-312"/>
</dbReference>
<dbReference type="PDB" id="2ZS9">
    <property type="method" value="X-ray"/>
    <property type="resolution" value="2.70 A"/>
    <property type="chains" value="A=1-312"/>
</dbReference>
<dbReference type="PDB" id="2ZSA">
    <property type="method" value="X-ray"/>
    <property type="resolution" value="2.50 A"/>
    <property type="chains" value="A=1-312"/>
</dbReference>
<dbReference type="PDB" id="2ZSB">
    <property type="method" value="X-ray"/>
    <property type="resolution" value="2.75 A"/>
    <property type="chains" value="A=1-312"/>
</dbReference>
<dbReference type="PDB" id="2ZSD">
    <property type="method" value="X-ray"/>
    <property type="resolution" value="2.50 A"/>
    <property type="chains" value="A=1-312"/>
</dbReference>
<dbReference type="PDB" id="2ZSE">
    <property type="method" value="X-ray"/>
    <property type="resolution" value="2.50 A"/>
    <property type="chains" value="A=1-312"/>
</dbReference>
<dbReference type="PDB" id="2ZSF">
    <property type="method" value="X-ray"/>
    <property type="resolution" value="2.80 A"/>
    <property type="chains" value="A=1-312"/>
</dbReference>
<dbReference type="PDB" id="3AEZ">
    <property type="method" value="X-ray"/>
    <property type="resolution" value="2.20 A"/>
    <property type="chains" value="A=1-312"/>
</dbReference>
<dbReference type="PDB" id="3AF0">
    <property type="method" value="X-ray"/>
    <property type="resolution" value="2.50 A"/>
    <property type="chains" value="A=1-312"/>
</dbReference>
<dbReference type="PDB" id="3AF1">
    <property type="method" value="X-ray"/>
    <property type="resolution" value="2.50 A"/>
    <property type="chains" value="A=1-312"/>
</dbReference>
<dbReference type="PDB" id="3AF2">
    <property type="method" value="X-ray"/>
    <property type="resolution" value="2.30 A"/>
    <property type="chains" value="A=1-312"/>
</dbReference>
<dbReference type="PDB" id="3AF3">
    <property type="method" value="X-ray"/>
    <property type="resolution" value="2.35 A"/>
    <property type="chains" value="A=1-312"/>
</dbReference>
<dbReference type="PDB" id="3AF4">
    <property type="method" value="X-ray"/>
    <property type="resolution" value="2.60 A"/>
    <property type="chains" value="A=1-312"/>
</dbReference>
<dbReference type="PDB" id="3AVO">
    <property type="method" value="X-ray"/>
    <property type="resolution" value="2.55 A"/>
    <property type="chains" value="A=1-312"/>
</dbReference>
<dbReference type="PDB" id="3AVP">
    <property type="method" value="X-ray"/>
    <property type="resolution" value="2.60 A"/>
    <property type="chains" value="A=1-312"/>
</dbReference>
<dbReference type="PDB" id="3AVQ">
    <property type="method" value="X-ray"/>
    <property type="resolution" value="3.00 A"/>
    <property type="chains" value="A=1-312"/>
</dbReference>
<dbReference type="PDB" id="4BFS">
    <property type="method" value="X-ray"/>
    <property type="resolution" value="2.90 A"/>
    <property type="chains" value="A=1-312"/>
</dbReference>
<dbReference type="PDB" id="4BFT">
    <property type="method" value="X-ray"/>
    <property type="resolution" value="2.29 A"/>
    <property type="chains" value="A/B=1-312"/>
</dbReference>
<dbReference type="PDB" id="4BFU">
    <property type="method" value="X-ray"/>
    <property type="resolution" value="2.28 A"/>
    <property type="chains" value="A/B=1-312"/>
</dbReference>
<dbReference type="PDB" id="4BFV">
    <property type="method" value="X-ray"/>
    <property type="resolution" value="2.29 A"/>
    <property type="chains" value="A/B=1-312"/>
</dbReference>
<dbReference type="PDB" id="4BFW">
    <property type="method" value="X-ray"/>
    <property type="resolution" value="2.27 A"/>
    <property type="chains" value="A/B=1-312"/>
</dbReference>
<dbReference type="PDB" id="4BFX">
    <property type="method" value="X-ray"/>
    <property type="resolution" value="2.70 A"/>
    <property type="chains" value="A/B=1-312"/>
</dbReference>
<dbReference type="PDB" id="4BFY">
    <property type="method" value="X-ray"/>
    <property type="resolution" value="2.30 A"/>
    <property type="chains" value="A/B=1-312"/>
</dbReference>
<dbReference type="PDB" id="4BFZ">
    <property type="method" value="X-ray"/>
    <property type="resolution" value="2.10 A"/>
    <property type="chains" value="A/B=1-312"/>
</dbReference>
<dbReference type="PDB" id="5XLV">
    <property type="method" value="X-ray"/>
    <property type="resolution" value="1.80 A"/>
    <property type="chains" value="A/B=1-312"/>
</dbReference>
<dbReference type="PDB" id="5XLW">
    <property type="method" value="X-ray"/>
    <property type="resolution" value="2.26 A"/>
    <property type="chains" value="A/B=1-312"/>
</dbReference>
<dbReference type="PDB" id="5XMB">
    <property type="method" value="X-ray"/>
    <property type="resolution" value="3.20 A"/>
    <property type="chains" value="A/B/C/D=1-312"/>
</dbReference>
<dbReference type="PDBsum" id="2GES"/>
<dbReference type="PDBsum" id="2GET"/>
<dbReference type="PDBsum" id="2GEU"/>
<dbReference type="PDBsum" id="2GEV"/>
<dbReference type="PDBsum" id="2ZS7"/>
<dbReference type="PDBsum" id="2ZS8"/>
<dbReference type="PDBsum" id="2ZS9"/>
<dbReference type="PDBsum" id="2ZSA"/>
<dbReference type="PDBsum" id="2ZSB"/>
<dbReference type="PDBsum" id="2ZSD"/>
<dbReference type="PDBsum" id="2ZSE"/>
<dbReference type="PDBsum" id="2ZSF"/>
<dbReference type="PDBsum" id="3AEZ"/>
<dbReference type="PDBsum" id="3AF0"/>
<dbReference type="PDBsum" id="3AF1"/>
<dbReference type="PDBsum" id="3AF2"/>
<dbReference type="PDBsum" id="3AF3"/>
<dbReference type="PDBsum" id="3AF4"/>
<dbReference type="PDBsum" id="3AVO"/>
<dbReference type="PDBsum" id="3AVP"/>
<dbReference type="PDBsum" id="3AVQ"/>
<dbReference type="PDBsum" id="4BFS"/>
<dbReference type="PDBsum" id="4BFT"/>
<dbReference type="PDBsum" id="4BFU"/>
<dbReference type="PDBsum" id="4BFV"/>
<dbReference type="PDBsum" id="4BFW"/>
<dbReference type="PDBsum" id="4BFX"/>
<dbReference type="PDBsum" id="4BFY"/>
<dbReference type="PDBsum" id="4BFZ"/>
<dbReference type="PDBsum" id="5XLV"/>
<dbReference type="PDBsum" id="5XLW"/>
<dbReference type="PDBsum" id="5XMB"/>
<dbReference type="SMR" id="P9WPA7"/>
<dbReference type="FunCoup" id="P9WPA7">
    <property type="interactions" value="246"/>
</dbReference>
<dbReference type="STRING" id="83332.Rv1092c"/>
<dbReference type="BindingDB" id="P9WPA7"/>
<dbReference type="PaxDb" id="83332-Rv1092c"/>
<dbReference type="DNASU" id="885120"/>
<dbReference type="GeneID" id="45425066"/>
<dbReference type="GeneID" id="885120"/>
<dbReference type="KEGG" id="mtu:Rv1092c"/>
<dbReference type="KEGG" id="mtv:RVBD_1092c"/>
<dbReference type="TubercuList" id="Rv1092c"/>
<dbReference type="eggNOG" id="COG0572">
    <property type="taxonomic scope" value="Bacteria"/>
</dbReference>
<dbReference type="InParanoid" id="P9WPA7"/>
<dbReference type="OrthoDB" id="1550976at2"/>
<dbReference type="PhylomeDB" id="P9WPA7"/>
<dbReference type="BRENDA" id="2.7.1.33">
    <property type="organism ID" value="3445"/>
</dbReference>
<dbReference type="SABIO-RK" id="P9WPA7"/>
<dbReference type="UniPathway" id="UPA00241">
    <property type="reaction ID" value="UER00352"/>
</dbReference>
<dbReference type="EvolutionaryTrace" id="P9WPA7"/>
<dbReference type="Proteomes" id="UP000001584">
    <property type="component" value="Chromosome"/>
</dbReference>
<dbReference type="GO" id="GO:0005737">
    <property type="term" value="C:cytoplasm"/>
    <property type="evidence" value="ECO:0000318"/>
    <property type="project" value="GO_Central"/>
</dbReference>
<dbReference type="GO" id="GO:0005886">
    <property type="term" value="C:plasma membrane"/>
    <property type="evidence" value="ECO:0007005"/>
    <property type="project" value="MTBBASE"/>
</dbReference>
<dbReference type="GO" id="GO:0005524">
    <property type="term" value="F:ATP binding"/>
    <property type="evidence" value="ECO:0007669"/>
    <property type="project" value="UniProtKB-UniRule"/>
</dbReference>
<dbReference type="GO" id="GO:0004594">
    <property type="term" value="F:pantothenate kinase activity"/>
    <property type="evidence" value="ECO:0000314"/>
    <property type="project" value="MTBBASE"/>
</dbReference>
<dbReference type="GO" id="GO:0015937">
    <property type="term" value="P:coenzyme A biosynthetic process"/>
    <property type="evidence" value="ECO:0000314"/>
    <property type="project" value="MTBBASE"/>
</dbReference>
<dbReference type="CDD" id="cd02025">
    <property type="entry name" value="PanK"/>
    <property type="match status" value="1"/>
</dbReference>
<dbReference type="FunFam" id="3.40.50.300:FF:000242">
    <property type="entry name" value="Pantothenate kinase"/>
    <property type="match status" value="1"/>
</dbReference>
<dbReference type="Gene3D" id="3.40.50.300">
    <property type="entry name" value="P-loop containing nucleotide triphosphate hydrolases"/>
    <property type="match status" value="1"/>
</dbReference>
<dbReference type="HAMAP" id="MF_00215">
    <property type="entry name" value="Pantothen_kinase_1"/>
    <property type="match status" value="1"/>
</dbReference>
<dbReference type="InterPro" id="IPR027417">
    <property type="entry name" value="P-loop_NTPase"/>
</dbReference>
<dbReference type="InterPro" id="IPR004566">
    <property type="entry name" value="PanK"/>
</dbReference>
<dbReference type="InterPro" id="IPR006083">
    <property type="entry name" value="PRK/URK"/>
</dbReference>
<dbReference type="NCBIfam" id="TIGR00554">
    <property type="entry name" value="panK_bact"/>
    <property type="match status" value="1"/>
</dbReference>
<dbReference type="PANTHER" id="PTHR10285">
    <property type="entry name" value="URIDINE KINASE"/>
    <property type="match status" value="1"/>
</dbReference>
<dbReference type="Pfam" id="PF00485">
    <property type="entry name" value="PRK"/>
    <property type="match status" value="1"/>
</dbReference>
<dbReference type="PIRSF" id="PIRSF000545">
    <property type="entry name" value="Pantothenate_kin"/>
    <property type="match status" value="1"/>
</dbReference>
<dbReference type="SUPFAM" id="SSF52540">
    <property type="entry name" value="P-loop containing nucleoside triphosphate hydrolases"/>
    <property type="match status" value="1"/>
</dbReference>
<proteinExistence type="evidence at protein level"/>
<protein>
    <recommendedName>
        <fullName>Pantothenate kinase</fullName>
        <ecNumber>2.7.1.33</ecNumber>
    </recommendedName>
    <alternativeName>
        <fullName>Pantothenic acid kinase</fullName>
    </alternativeName>
</protein>
<organism>
    <name type="scientific">Mycobacterium tuberculosis (strain ATCC 25618 / H37Rv)</name>
    <dbReference type="NCBI Taxonomy" id="83332"/>
    <lineage>
        <taxon>Bacteria</taxon>
        <taxon>Bacillati</taxon>
        <taxon>Actinomycetota</taxon>
        <taxon>Actinomycetes</taxon>
        <taxon>Mycobacteriales</taxon>
        <taxon>Mycobacteriaceae</taxon>
        <taxon>Mycobacterium</taxon>
        <taxon>Mycobacterium tuberculosis complex</taxon>
    </lineage>
</organism>